<protein>
    <recommendedName>
        <fullName>Neuromedin-B receptor</fullName>
        <shortName>NMB-R</shortName>
    </recommendedName>
    <alternativeName>
        <fullName>Epididymis tissue protein Li 185a</fullName>
    </alternativeName>
    <alternativeName>
        <fullName>Neuromedin-B-preferring bombesin receptor</fullName>
    </alternativeName>
</protein>
<reference key="1">
    <citation type="journal article" date="1991" name="J. Biol. Chem.">
        <title>Two distinct bombesin receptor subtypes are expressed and functional in human lung carcinoma cells.</title>
        <authorList>
            <person name="Corjay M.H."/>
            <person name="Dobrzanski D.J."/>
            <person name="Way J.M."/>
            <person name="Viallet J."/>
            <person name="Shapira H."/>
            <person name="Worland P."/>
            <person name="Sausville E.A."/>
            <person name="Battey J.F."/>
        </authorList>
    </citation>
    <scope>NUCLEOTIDE SEQUENCE [MRNA]</scope>
    <scope>FUNCTION</scope>
    <scope>VARIANT MET-390</scope>
</reference>
<reference key="2">
    <citation type="journal article" date="2010" name="Mol. Cell. Proteomics">
        <title>Systematic mapping and functional analysis of a family of human epididymal secretory sperm-located proteins.</title>
        <authorList>
            <person name="Li J."/>
            <person name="Liu F."/>
            <person name="Wang H."/>
            <person name="Liu X."/>
            <person name="Liu J."/>
            <person name="Li N."/>
            <person name="Wan F."/>
            <person name="Wang W."/>
            <person name="Zhang C."/>
            <person name="Jin S."/>
            <person name="Liu J."/>
            <person name="Zhu P."/>
            <person name="Liu Y."/>
        </authorList>
    </citation>
    <scope>NUCLEOTIDE SEQUENCE [MRNA]</scope>
    <scope>TISSUE SPECIFICITY</scope>
    <source>
        <tissue>Epididymis</tissue>
    </source>
</reference>
<reference key="3">
    <citation type="journal article" date="2003" name="Nature">
        <title>The DNA sequence and analysis of human chromosome 6.</title>
        <authorList>
            <person name="Mungall A.J."/>
            <person name="Palmer S.A."/>
            <person name="Sims S.K."/>
            <person name="Edwards C.A."/>
            <person name="Ashurst J.L."/>
            <person name="Wilming L."/>
            <person name="Jones M.C."/>
            <person name="Horton R."/>
            <person name="Hunt S.E."/>
            <person name="Scott C.E."/>
            <person name="Gilbert J.G.R."/>
            <person name="Clamp M.E."/>
            <person name="Bethel G."/>
            <person name="Milne S."/>
            <person name="Ainscough R."/>
            <person name="Almeida J.P."/>
            <person name="Ambrose K.D."/>
            <person name="Andrews T.D."/>
            <person name="Ashwell R.I.S."/>
            <person name="Babbage A.K."/>
            <person name="Bagguley C.L."/>
            <person name="Bailey J."/>
            <person name="Banerjee R."/>
            <person name="Barker D.J."/>
            <person name="Barlow K.F."/>
            <person name="Bates K."/>
            <person name="Beare D.M."/>
            <person name="Beasley H."/>
            <person name="Beasley O."/>
            <person name="Bird C.P."/>
            <person name="Blakey S.E."/>
            <person name="Bray-Allen S."/>
            <person name="Brook J."/>
            <person name="Brown A.J."/>
            <person name="Brown J.Y."/>
            <person name="Burford D.C."/>
            <person name="Burrill W."/>
            <person name="Burton J."/>
            <person name="Carder C."/>
            <person name="Carter N.P."/>
            <person name="Chapman J.C."/>
            <person name="Clark S.Y."/>
            <person name="Clark G."/>
            <person name="Clee C.M."/>
            <person name="Clegg S."/>
            <person name="Cobley V."/>
            <person name="Collier R.E."/>
            <person name="Collins J.E."/>
            <person name="Colman L.K."/>
            <person name="Corby N.R."/>
            <person name="Coville G.J."/>
            <person name="Culley K.M."/>
            <person name="Dhami P."/>
            <person name="Davies J."/>
            <person name="Dunn M."/>
            <person name="Earthrowl M.E."/>
            <person name="Ellington A.E."/>
            <person name="Evans K.A."/>
            <person name="Faulkner L."/>
            <person name="Francis M.D."/>
            <person name="Frankish A."/>
            <person name="Frankland J."/>
            <person name="French L."/>
            <person name="Garner P."/>
            <person name="Garnett J."/>
            <person name="Ghori M.J."/>
            <person name="Gilby L.M."/>
            <person name="Gillson C.J."/>
            <person name="Glithero R.J."/>
            <person name="Grafham D.V."/>
            <person name="Grant M."/>
            <person name="Gribble S."/>
            <person name="Griffiths C."/>
            <person name="Griffiths M.N.D."/>
            <person name="Hall R."/>
            <person name="Halls K.S."/>
            <person name="Hammond S."/>
            <person name="Harley J.L."/>
            <person name="Hart E.A."/>
            <person name="Heath P.D."/>
            <person name="Heathcott R."/>
            <person name="Holmes S.J."/>
            <person name="Howden P.J."/>
            <person name="Howe K.L."/>
            <person name="Howell G.R."/>
            <person name="Huckle E."/>
            <person name="Humphray S.J."/>
            <person name="Humphries M.D."/>
            <person name="Hunt A.R."/>
            <person name="Johnson C.M."/>
            <person name="Joy A.A."/>
            <person name="Kay M."/>
            <person name="Keenan S.J."/>
            <person name="Kimberley A.M."/>
            <person name="King A."/>
            <person name="Laird G.K."/>
            <person name="Langford C."/>
            <person name="Lawlor S."/>
            <person name="Leongamornlert D.A."/>
            <person name="Leversha M."/>
            <person name="Lloyd C.R."/>
            <person name="Lloyd D.M."/>
            <person name="Loveland J.E."/>
            <person name="Lovell J."/>
            <person name="Martin S."/>
            <person name="Mashreghi-Mohammadi M."/>
            <person name="Maslen G.L."/>
            <person name="Matthews L."/>
            <person name="McCann O.T."/>
            <person name="McLaren S.J."/>
            <person name="McLay K."/>
            <person name="McMurray A."/>
            <person name="Moore M.J.F."/>
            <person name="Mullikin J.C."/>
            <person name="Niblett D."/>
            <person name="Nickerson T."/>
            <person name="Novik K.L."/>
            <person name="Oliver K."/>
            <person name="Overton-Larty E.K."/>
            <person name="Parker A."/>
            <person name="Patel R."/>
            <person name="Pearce A.V."/>
            <person name="Peck A.I."/>
            <person name="Phillimore B.J.C.T."/>
            <person name="Phillips S."/>
            <person name="Plumb R.W."/>
            <person name="Porter K.M."/>
            <person name="Ramsey Y."/>
            <person name="Ranby S.A."/>
            <person name="Rice C.M."/>
            <person name="Ross M.T."/>
            <person name="Searle S.M."/>
            <person name="Sehra H.K."/>
            <person name="Sheridan E."/>
            <person name="Skuce C.D."/>
            <person name="Smith S."/>
            <person name="Smith M."/>
            <person name="Spraggon L."/>
            <person name="Squares S.L."/>
            <person name="Steward C.A."/>
            <person name="Sycamore N."/>
            <person name="Tamlyn-Hall G."/>
            <person name="Tester J."/>
            <person name="Theaker A.J."/>
            <person name="Thomas D.W."/>
            <person name="Thorpe A."/>
            <person name="Tracey A."/>
            <person name="Tromans A."/>
            <person name="Tubby B."/>
            <person name="Wall M."/>
            <person name="Wallis J.M."/>
            <person name="West A.P."/>
            <person name="White S.S."/>
            <person name="Whitehead S.L."/>
            <person name="Whittaker H."/>
            <person name="Wild A."/>
            <person name="Willey D.J."/>
            <person name="Wilmer T.E."/>
            <person name="Wood J.M."/>
            <person name="Wray P.W."/>
            <person name="Wyatt J.C."/>
            <person name="Young L."/>
            <person name="Younger R.M."/>
            <person name="Bentley D.R."/>
            <person name="Coulson A."/>
            <person name="Durbin R.M."/>
            <person name="Hubbard T."/>
            <person name="Sulston J.E."/>
            <person name="Dunham I."/>
            <person name="Rogers J."/>
            <person name="Beck S."/>
        </authorList>
    </citation>
    <scope>NUCLEOTIDE SEQUENCE [LARGE SCALE GENOMIC DNA]</scope>
</reference>
<reference key="4">
    <citation type="submission" date="2005-09" db="EMBL/GenBank/DDBJ databases">
        <authorList>
            <person name="Mural R.J."/>
            <person name="Istrail S."/>
            <person name="Sutton G.G."/>
            <person name="Florea L."/>
            <person name="Halpern A.L."/>
            <person name="Mobarry C.M."/>
            <person name="Lippert R."/>
            <person name="Walenz B."/>
            <person name="Shatkay H."/>
            <person name="Dew I."/>
            <person name="Miller J.R."/>
            <person name="Flanigan M.J."/>
            <person name="Edwards N.J."/>
            <person name="Bolanos R."/>
            <person name="Fasulo D."/>
            <person name="Halldorsson B.V."/>
            <person name="Hannenhalli S."/>
            <person name="Turner R."/>
            <person name="Yooseph S."/>
            <person name="Lu F."/>
            <person name="Nusskern D.R."/>
            <person name="Shue B.C."/>
            <person name="Zheng X.H."/>
            <person name="Zhong F."/>
            <person name="Delcher A.L."/>
            <person name="Huson D.H."/>
            <person name="Kravitz S.A."/>
            <person name="Mouchard L."/>
            <person name="Reinert K."/>
            <person name="Remington K.A."/>
            <person name="Clark A.G."/>
            <person name="Waterman M.S."/>
            <person name="Eichler E.E."/>
            <person name="Adams M.D."/>
            <person name="Hunkapiller M.W."/>
            <person name="Myers E.W."/>
            <person name="Venter J.C."/>
        </authorList>
    </citation>
    <scope>NUCLEOTIDE SEQUENCE [LARGE SCALE GENOMIC DNA]</scope>
</reference>
<reference key="5">
    <citation type="journal article" date="2019" name="Vet. Res.">
        <title>Role of neuromedin B and its receptor in the innate immune responses against influenza A virus infection in vitro and in vivo.</title>
        <authorList>
            <person name="Yang G."/>
            <person name="Huang H."/>
            <person name="Tang M."/>
            <person name="Cai Z."/>
            <person name="Huang C."/>
            <person name="Qi B."/>
            <person name="Chen J.L."/>
        </authorList>
    </citation>
    <scope>FUNCTION</scope>
    <scope>INDUCTION</scope>
</reference>
<comment type="function">
    <text evidence="1 6 8">Receptor for neuromedin-B (PubMed:1655761). Contributes to the maintenance of basal sigh rate through signaling in the pre-Botzinger complex, a cluster of several thousand neurons in the ventrolateral medulla responsible for inspiration during respiratory activity (By similarity). Contributes to the induction of sneezing following exposure to chemical irritants or allergens which causes release of NMB by nasal sensory neurons and activation of NMBR-expressing neurons in the sneeze-evoking region of the brainstem (By similarity). These in turn activate neurons of the caudal ventral respiratory group, giving rise to the sneezing response (By similarity). Contributes to induction of acute itch, possibly through its activation on dorsal root ganglion neurons by the NMB peptide (By similarity). Plays a role in the innate immune response to influenza A virus infection by enhancing interferon alpha expression and reducing expression of IL6 (PubMed:31601264). Plays a role in CSF1-induced proliferation of osteoclast precursors by contributing to the positive regulation of the expression of the CSF1 receptor CSF1R (By similarity).</text>
</comment>
<comment type="subcellular location">
    <subcellularLocation>
        <location evidence="9">Cell membrane</location>
        <topology evidence="3">Multi-pass membrane protein</topology>
    </subcellularLocation>
</comment>
<comment type="tissue specificity">
    <text evidence="7">Expressed in epididymis (at protein level).</text>
</comment>
<comment type="induction">
    <text evidence="8">Up-regulated in response to infection with influenza A virus.</text>
</comment>
<comment type="similarity">
    <text evidence="4">Belongs to the G-protein coupled receptor 1 family.</text>
</comment>
<evidence type="ECO:0000250" key="1">
    <source>
        <dbReference type="UniProtKB" id="O54799"/>
    </source>
</evidence>
<evidence type="ECO:0000250" key="2">
    <source>
        <dbReference type="UniProtKB" id="P21917"/>
    </source>
</evidence>
<evidence type="ECO:0000255" key="3"/>
<evidence type="ECO:0000255" key="4">
    <source>
        <dbReference type="PROSITE-ProRule" id="PRU00521"/>
    </source>
</evidence>
<evidence type="ECO:0000256" key="5">
    <source>
        <dbReference type="SAM" id="MobiDB-lite"/>
    </source>
</evidence>
<evidence type="ECO:0000269" key="6">
    <source>
    </source>
</evidence>
<evidence type="ECO:0000269" key="7">
    <source>
    </source>
</evidence>
<evidence type="ECO:0000269" key="8">
    <source>
    </source>
</evidence>
<evidence type="ECO:0000305" key="9"/>
<evidence type="ECO:0007829" key="10">
    <source>
        <dbReference type="PDB" id="8H0P"/>
    </source>
</evidence>
<sequence length="390" mass="43435">MPSKSLSNLSVTTGANESGSVPEGWERDFLPASDGTTTELVIRCVIPSLYLLIITVGLLGNIMLVKIFITNSAMRSVPNIFISNLAAGDLLLLLTCVPVDASRYFFDEWMFGKVGCKLIPVIQLTSVGVSVFTLTALSADRYRAIVNPMDMQTSGALLRTCVKAMGIWVVSVLLAVPEAVFSEVARISSLDNSSFTACIPYPQTDELHPKIHSVLIFLVYFLIPLAIISIYYYHIAKTLIKSAHNLPGEYNEHTKKQMETRKRLAKIVLVFVGCFIFCWFPNHILYMYRSFNYNEIDPSLGHMIVTLVARVLSFGNSCVNPFALYLLSESFRRHFNSQLCCGRKSYQERGTSYLLSSSAVRMTSLKSNAKNMVTNSVLLNGHSMKQEMAL</sequence>
<accession>P28336</accession>
<accession>E9KL38</accession>
<accession>Q5VUK8</accession>
<gene>
    <name type="primary">NMBR</name>
</gene>
<keyword id="KW-0002">3D-structure</keyword>
<keyword id="KW-1003">Cell membrane</keyword>
<keyword id="KW-1015">Disulfide bond</keyword>
<keyword id="KW-0297">G-protein coupled receptor</keyword>
<keyword id="KW-0325">Glycoprotein</keyword>
<keyword id="KW-0449">Lipoprotein</keyword>
<keyword id="KW-0472">Membrane</keyword>
<keyword id="KW-0564">Palmitate</keyword>
<keyword id="KW-0597">Phosphoprotein</keyword>
<keyword id="KW-0675">Receptor</keyword>
<keyword id="KW-1185">Reference proteome</keyword>
<keyword id="KW-0807">Transducer</keyword>
<keyword id="KW-0812">Transmembrane</keyword>
<keyword id="KW-1133">Transmembrane helix</keyword>
<organism>
    <name type="scientific">Homo sapiens</name>
    <name type="common">Human</name>
    <dbReference type="NCBI Taxonomy" id="9606"/>
    <lineage>
        <taxon>Eukaryota</taxon>
        <taxon>Metazoa</taxon>
        <taxon>Chordata</taxon>
        <taxon>Craniata</taxon>
        <taxon>Vertebrata</taxon>
        <taxon>Euteleostomi</taxon>
        <taxon>Mammalia</taxon>
        <taxon>Eutheria</taxon>
        <taxon>Euarchontoglires</taxon>
        <taxon>Primates</taxon>
        <taxon>Haplorrhini</taxon>
        <taxon>Catarrhini</taxon>
        <taxon>Hominidae</taxon>
        <taxon>Homo</taxon>
    </lineage>
</organism>
<dbReference type="EMBL" id="M73482">
    <property type="protein sequence ID" value="AAA59939.1"/>
    <property type="molecule type" value="mRNA"/>
</dbReference>
<dbReference type="EMBL" id="GU727635">
    <property type="protein sequence ID" value="ADU87637.1"/>
    <property type="molecule type" value="mRNA"/>
</dbReference>
<dbReference type="EMBL" id="AL589674">
    <property type="status" value="NOT_ANNOTATED_CDS"/>
    <property type="molecule type" value="Genomic_DNA"/>
</dbReference>
<dbReference type="EMBL" id="CH471051">
    <property type="protein sequence ID" value="EAW47886.1"/>
    <property type="molecule type" value="Genomic_DNA"/>
</dbReference>
<dbReference type="CCDS" id="CCDS5196.1"/>
<dbReference type="PIR" id="B41007">
    <property type="entry name" value="B41007"/>
</dbReference>
<dbReference type="RefSeq" id="NP_001311236.1">
    <property type="nucleotide sequence ID" value="NM_001324307.1"/>
</dbReference>
<dbReference type="RefSeq" id="NP_001311237.1">
    <property type="nucleotide sequence ID" value="NM_001324308.1"/>
</dbReference>
<dbReference type="RefSeq" id="NP_002502.2">
    <property type="nucleotide sequence ID" value="NM_002511.4"/>
</dbReference>
<dbReference type="PDB" id="8H0P">
    <property type="method" value="EM"/>
    <property type="resolution" value="3.15 A"/>
    <property type="chains" value="R=1-390"/>
</dbReference>
<dbReference type="PDBsum" id="8H0P"/>
<dbReference type="EMDB" id="EMD-34413"/>
<dbReference type="SMR" id="P28336"/>
<dbReference type="BioGRID" id="110893">
    <property type="interactions" value="2"/>
</dbReference>
<dbReference type="FunCoup" id="P28336">
    <property type="interactions" value="856"/>
</dbReference>
<dbReference type="STRING" id="9606.ENSP00000258042"/>
<dbReference type="BindingDB" id="P28336"/>
<dbReference type="ChEMBL" id="CHEMBL3636"/>
<dbReference type="DrugBank" id="DB11724">
    <property type="generic name" value="Bombesin"/>
</dbReference>
<dbReference type="GuidetoPHARMACOLOGY" id="38"/>
<dbReference type="GlyCosmos" id="P28336">
    <property type="glycosylation" value="3 sites, No reported glycans"/>
</dbReference>
<dbReference type="GlyGen" id="P28336">
    <property type="glycosylation" value="3 sites"/>
</dbReference>
<dbReference type="iPTMnet" id="P28336"/>
<dbReference type="PhosphoSitePlus" id="P28336"/>
<dbReference type="BioMuta" id="NMBR"/>
<dbReference type="DMDM" id="212286370"/>
<dbReference type="PaxDb" id="9606-ENSP00000258042"/>
<dbReference type="PeptideAtlas" id="P28336"/>
<dbReference type="ProteomicsDB" id="54477"/>
<dbReference type="Antibodypedia" id="19807">
    <property type="antibodies" value="284 antibodies from 29 providers"/>
</dbReference>
<dbReference type="DNASU" id="4829"/>
<dbReference type="Ensembl" id="ENST00000258042.2">
    <property type="protein sequence ID" value="ENSP00000258042.1"/>
    <property type="gene ID" value="ENSG00000135577.5"/>
</dbReference>
<dbReference type="GeneID" id="4829"/>
<dbReference type="KEGG" id="hsa:4829"/>
<dbReference type="MANE-Select" id="ENST00000258042.2">
    <property type="protein sequence ID" value="ENSP00000258042.1"/>
    <property type="RefSeq nucleotide sequence ID" value="NM_002511.4"/>
    <property type="RefSeq protein sequence ID" value="NP_002502.2"/>
</dbReference>
<dbReference type="UCSC" id="uc003qiu.3">
    <property type="organism name" value="human"/>
</dbReference>
<dbReference type="AGR" id="HGNC:7843"/>
<dbReference type="CTD" id="4829"/>
<dbReference type="DisGeNET" id="4829"/>
<dbReference type="GeneCards" id="NMBR"/>
<dbReference type="HGNC" id="HGNC:7843">
    <property type="gene designation" value="NMBR"/>
</dbReference>
<dbReference type="HPA" id="ENSG00000135577">
    <property type="expression patterns" value="Not detected"/>
</dbReference>
<dbReference type="MIM" id="162341">
    <property type="type" value="gene"/>
</dbReference>
<dbReference type="neXtProt" id="NX_P28336"/>
<dbReference type="OpenTargets" id="ENSG00000135577"/>
<dbReference type="PharmGKB" id="PA31655"/>
<dbReference type="VEuPathDB" id="HostDB:ENSG00000135577"/>
<dbReference type="eggNOG" id="KOG3656">
    <property type="taxonomic scope" value="Eukaryota"/>
</dbReference>
<dbReference type="GeneTree" id="ENSGT01120000271837"/>
<dbReference type="HOGENOM" id="CLU_009579_6_2_1"/>
<dbReference type="InParanoid" id="P28336"/>
<dbReference type="OMA" id="GWERDFL"/>
<dbReference type="OrthoDB" id="10049706at2759"/>
<dbReference type="PAN-GO" id="P28336">
    <property type="GO annotations" value="3 GO annotations based on evolutionary models"/>
</dbReference>
<dbReference type="PhylomeDB" id="P28336"/>
<dbReference type="TreeFam" id="TF331292"/>
<dbReference type="PathwayCommons" id="P28336"/>
<dbReference type="Reactome" id="R-HSA-375276">
    <property type="pathway name" value="Peptide ligand-binding receptors"/>
</dbReference>
<dbReference type="Reactome" id="R-HSA-416476">
    <property type="pathway name" value="G alpha (q) signalling events"/>
</dbReference>
<dbReference type="SignaLink" id="P28336"/>
<dbReference type="SIGNOR" id="P28336"/>
<dbReference type="BioGRID-ORCS" id="4829">
    <property type="hits" value="10 hits in 1146 CRISPR screens"/>
</dbReference>
<dbReference type="GeneWiki" id="Neuromedin_B_receptor"/>
<dbReference type="GenomeRNAi" id="4829"/>
<dbReference type="Pharos" id="P28336">
    <property type="development level" value="Tchem"/>
</dbReference>
<dbReference type="PRO" id="PR:P28336"/>
<dbReference type="Proteomes" id="UP000005640">
    <property type="component" value="Chromosome 6"/>
</dbReference>
<dbReference type="RNAct" id="P28336">
    <property type="molecule type" value="protein"/>
</dbReference>
<dbReference type="Bgee" id="ENSG00000135577">
    <property type="expression patterns" value="Expressed in left testis and 61 other cell types or tissues"/>
</dbReference>
<dbReference type="GO" id="GO:0005829">
    <property type="term" value="C:cytosol"/>
    <property type="evidence" value="ECO:0000314"/>
    <property type="project" value="HPA"/>
</dbReference>
<dbReference type="GO" id="GO:0005886">
    <property type="term" value="C:plasma membrane"/>
    <property type="evidence" value="ECO:0000314"/>
    <property type="project" value="HPA"/>
</dbReference>
<dbReference type="GO" id="GO:0004946">
    <property type="term" value="F:bombesin receptor activity"/>
    <property type="evidence" value="ECO:0000304"/>
    <property type="project" value="ProtInc"/>
</dbReference>
<dbReference type="GO" id="GO:0008188">
    <property type="term" value="F:neuropeptide receptor activity"/>
    <property type="evidence" value="ECO:0000318"/>
    <property type="project" value="GO_Central"/>
</dbReference>
<dbReference type="GO" id="GO:0140374">
    <property type="term" value="P:antiviral innate immune response"/>
    <property type="evidence" value="ECO:0000315"/>
    <property type="project" value="UniProtKB"/>
</dbReference>
<dbReference type="GO" id="GO:0007186">
    <property type="term" value="P:G protein-coupled receptor signaling pathway"/>
    <property type="evidence" value="ECO:0000318"/>
    <property type="project" value="GO_Central"/>
</dbReference>
<dbReference type="GO" id="GO:0032715">
    <property type="term" value="P:negative regulation of interleukin-6 production"/>
    <property type="evidence" value="ECO:0000315"/>
    <property type="project" value="UniProtKB"/>
</dbReference>
<dbReference type="GO" id="GO:0007200">
    <property type="term" value="P:phospholipase C-activating G protein-coupled receptor signaling pathway"/>
    <property type="evidence" value="ECO:0000304"/>
    <property type="project" value="ProtInc"/>
</dbReference>
<dbReference type="GO" id="GO:0032727">
    <property type="term" value="P:positive regulation of interferon-alpha production"/>
    <property type="evidence" value="ECO:0000315"/>
    <property type="project" value="UniProtKB"/>
</dbReference>
<dbReference type="GO" id="GO:0090290">
    <property type="term" value="P:positive regulation of osteoclast proliferation"/>
    <property type="evidence" value="ECO:0000250"/>
    <property type="project" value="UniProtKB"/>
</dbReference>
<dbReference type="GO" id="GO:1903942">
    <property type="term" value="P:positive regulation of respiratory gaseous exchange"/>
    <property type="evidence" value="ECO:0000250"/>
    <property type="project" value="UniProtKB"/>
</dbReference>
<dbReference type="GO" id="GO:0160023">
    <property type="term" value="P:sneeze reflex"/>
    <property type="evidence" value="ECO:0000250"/>
    <property type="project" value="UniProtKB"/>
</dbReference>
<dbReference type="CDD" id="cd15125">
    <property type="entry name" value="7tmA_NMBR"/>
    <property type="match status" value="1"/>
</dbReference>
<dbReference type="FunFam" id="1.20.1070.10:FF:000132">
    <property type="entry name" value="Neuromedin-B receptor"/>
    <property type="match status" value="1"/>
</dbReference>
<dbReference type="Gene3D" id="1.20.1070.10">
    <property type="entry name" value="Rhodopsin 7-helix transmembrane proteins"/>
    <property type="match status" value="1"/>
</dbReference>
<dbReference type="InterPro" id="IPR001556">
    <property type="entry name" value="Bombsn_rcpt-like"/>
</dbReference>
<dbReference type="InterPro" id="IPR000276">
    <property type="entry name" value="GPCR_Rhodpsn"/>
</dbReference>
<dbReference type="InterPro" id="IPR017452">
    <property type="entry name" value="GPCR_Rhodpsn_7TM"/>
</dbReference>
<dbReference type="InterPro" id="IPR001642">
    <property type="entry name" value="NeuroB_rcpt"/>
</dbReference>
<dbReference type="PANTHER" id="PTHR45695">
    <property type="entry name" value="LEUCOKININ RECEPTOR-RELATED"/>
    <property type="match status" value="1"/>
</dbReference>
<dbReference type="PANTHER" id="PTHR45695:SF8">
    <property type="entry name" value="NEUROMEDIN-B RECEPTOR"/>
    <property type="match status" value="1"/>
</dbReference>
<dbReference type="Pfam" id="PF00001">
    <property type="entry name" value="7tm_1"/>
    <property type="match status" value="1"/>
</dbReference>
<dbReference type="PRINTS" id="PR00358">
    <property type="entry name" value="BOMBESINR"/>
</dbReference>
<dbReference type="PRINTS" id="PR00237">
    <property type="entry name" value="GPCRRHODOPSN"/>
</dbReference>
<dbReference type="PRINTS" id="PR00639">
    <property type="entry name" value="NEUROMEDINBR"/>
</dbReference>
<dbReference type="SMART" id="SM01381">
    <property type="entry name" value="7TM_GPCR_Srsx"/>
    <property type="match status" value="1"/>
</dbReference>
<dbReference type="SUPFAM" id="SSF81321">
    <property type="entry name" value="Family A G protein-coupled receptor-like"/>
    <property type="match status" value="1"/>
</dbReference>
<dbReference type="PROSITE" id="PS00237">
    <property type="entry name" value="G_PROTEIN_RECEP_F1_1"/>
    <property type="match status" value="1"/>
</dbReference>
<dbReference type="PROSITE" id="PS50262">
    <property type="entry name" value="G_PROTEIN_RECEP_F1_2"/>
    <property type="match status" value="1"/>
</dbReference>
<feature type="chain" id="PRO_0000069903" description="Neuromedin-B receptor">
    <location>
        <begin position="1"/>
        <end position="390"/>
    </location>
</feature>
<feature type="topological domain" description="Extracellular" evidence="3">
    <location>
        <begin position="1"/>
        <end position="41"/>
    </location>
</feature>
<feature type="transmembrane region" description="Helical; Name=1" evidence="3">
    <location>
        <begin position="42"/>
        <end position="65"/>
    </location>
</feature>
<feature type="topological domain" description="Cytoplasmic" evidence="3">
    <location>
        <begin position="66"/>
        <end position="79"/>
    </location>
</feature>
<feature type="transmembrane region" description="Helical; Name=2" evidence="3">
    <location>
        <begin position="80"/>
        <end position="99"/>
    </location>
</feature>
<feature type="topological domain" description="Extracellular" evidence="3">
    <location>
        <begin position="100"/>
        <end position="117"/>
    </location>
</feature>
<feature type="transmembrane region" description="Helical; Name=3" evidence="3">
    <location>
        <begin position="118"/>
        <end position="139"/>
    </location>
</feature>
<feature type="topological domain" description="Cytoplasmic" evidence="3">
    <location>
        <begin position="140"/>
        <end position="156"/>
    </location>
</feature>
<feature type="transmembrane region" description="Helical; Name=4" evidence="3">
    <location>
        <begin position="157"/>
        <end position="177"/>
    </location>
</feature>
<feature type="topological domain" description="Extracellular" evidence="3">
    <location>
        <begin position="178"/>
        <end position="211"/>
    </location>
</feature>
<feature type="transmembrane region" description="Helical; Name=5" evidence="3">
    <location>
        <begin position="212"/>
        <end position="235"/>
    </location>
</feature>
<feature type="topological domain" description="Cytoplasmic" evidence="3">
    <location>
        <begin position="236"/>
        <end position="266"/>
    </location>
</feature>
<feature type="transmembrane region" description="Helical; Name=6" evidence="3">
    <location>
        <begin position="267"/>
        <end position="287"/>
    </location>
</feature>
<feature type="topological domain" description="Extracellular" evidence="3">
    <location>
        <begin position="288"/>
        <end position="299"/>
    </location>
</feature>
<feature type="transmembrane region" description="Helical; Name=7" evidence="3">
    <location>
        <begin position="300"/>
        <end position="327"/>
    </location>
</feature>
<feature type="topological domain" description="Cytoplasmic" evidence="3">
    <location>
        <begin position="328"/>
        <end position="390"/>
    </location>
</feature>
<feature type="region of interest" description="Disordered" evidence="5">
    <location>
        <begin position="1"/>
        <end position="22"/>
    </location>
</feature>
<feature type="compositionally biased region" description="Polar residues" evidence="5">
    <location>
        <begin position="1"/>
        <end position="19"/>
    </location>
</feature>
<feature type="modified residue" description="Phosphoserine" evidence="1">
    <location>
        <position position="352"/>
    </location>
</feature>
<feature type="lipid moiety-binding region" description="S-palmitoyl cysteine" evidence="2">
    <location>
        <position position="341"/>
    </location>
</feature>
<feature type="glycosylation site" description="N-linked (GlcNAc...) asparagine" evidence="3">
    <location>
        <position position="8"/>
    </location>
</feature>
<feature type="glycosylation site" description="N-linked (GlcNAc...) asparagine" evidence="3">
    <location>
        <position position="16"/>
    </location>
</feature>
<feature type="glycosylation site" description="N-linked (GlcNAc...) asparagine" evidence="3">
    <location>
        <position position="192"/>
    </location>
</feature>
<feature type="disulfide bond" evidence="4">
    <location>
        <begin position="116"/>
        <end position="198"/>
    </location>
</feature>
<feature type="sequence variant" id="VAR_044513" description="In dbSNP:rs7453944." evidence="6">
    <original>L</original>
    <variation>M</variation>
    <location>
        <position position="390"/>
    </location>
</feature>
<feature type="helix" evidence="10">
    <location>
        <begin position="40"/>
        <end position="69"/>
    </location>
</feature>
<feature type="strand" evidence="10">
    <location>
        <begin position="72"/>
        <end position="74"/>
    </location>
</feature>
<feature type="helix" evidence="10">
    <location>
        <begin position="80"/>
        <end position="105"/>
    </location>
</feature>
<feature type="helix" evidence="10">
    <location>
        <begin position="113"/>
        <end position="146"/>
    </location>
</feature>
<feature type="helix" evidence="10">
    <location>
        <begin position="156"/>
        <end position="173"/>
    </location>
</feature>
<feature type="helix" evidence="10">
    <location>
        <begin position="177"/>
        <end position="180"/>
    </location>
</feature>
<feature type="strand" evidence="10">
    <location>
        <begin position="183"/>
        <end position="186"/>
    </location>
</feature>
<feature type="strand" evidence="10">
    <location>
        <begin position="196"/>
        <end position="201"/>
    </location>
</feature>
<feature type="helix" evidence="10">
    <location>
        <begin position="207"/>
        <end position="220"/>
    </location>
</feature>
<feature type="helix" evidence="10">
    <location>
        <begin position="222"/>
        <end position="243"/>
    </location>
</feature>
<feature type="helix" evidence="10">
    <location>
        <begin position="257"/>
        <end position="291"/>
    </location>
</feature>
<feature type="strand" evidence="10">
    <location>
        <begin position="293"/>
        <end position="295"/>
    </location>
</feature>
<feature type="helix" evidence="10">
    <location>
        <begin position="300"/>
        <end position="313"/>
    </location>
</feature>
<feature type="helix" evidence="10">
    <location>
        <begin position="316"/>
        <end position="327"/>
    </location>
</feature>
<feature type="helix" evidence="10">
    <location>
        <begin position="330"/>
        <end position="341"/>
    </location>
</feature>
<proteinExistence type="evidence at protein level"/>
<name>NMBR_HUMAN</name>